<gene>
    <name evidence="1" type="primary">macB</name>
    <name type="ordered locus">SDY_2382</name>
</gene>
<reference key="1">
    <citation type="journal article" date="2005" name="Nucleic Acids Res.">
        <title>Genome dynamics and diversity of Shigella species, the etiologic agents of bacillary dysentery.</title>
        <authorList>
            <person name="Yang F."/>
            <person name="Yang J."/>
            <person name="Zhang X."/>
            <person name="Chen L."/>
            <person name="Jiang Y."/>
            <person name="Yan Y."/>
            <person name="Tang X."/>
            <person name="Wang J."/>
            <person name="Xiong Z."/>
            <person name="Dong J."/>
            <person name="Xue Y."/>
            <person name="Zhu Y."/>
            <person name="Xu X."/>
            <person name="Sun L."/>
            <person name="Chen S."/>
            <person name="Nie H."/>
            <person name="Peng J."/>
            <person name="Xu J."/>
            <person name="Wang Y."/>
            <person name="Yuan Z."/>
            <person name="Wen Y."/>
            <person name="Yao Z."/>
            <person name="Shen Y."/>
            <person name="Qiang B."/>
            <person name="Hou Y."/>
            <person name="Yu J."/>
            <person name="Jin Q."/>
        </authorList>
    </citation>
    <scope>NUCLEOTIDE SEQUENCE [LARGE SCALE GENOMIC DNA]</scope>
    <source>
        <strain>Sd197</strain>
    </source>
</reference>
<feature type="chain" id="PRO_0000269980" description="Macrolide export ATP-binding/permease protein MacB">
    <location>
        <begin position="1"/>
        <end position="650"/>
    </location>
</feature>
<feature type="transmembrane region" description="Helical" evidence="1">
    <location>
        <begin position="273"/>
        <end position="293"/>
    </location>
</feature>
<feature type="transmembrane region" description="Helical" evidence="1">
    <location>
        <begin position="523"/>
        <end position="543"/>
    </location>
</feature>
<feature type="transmembrane region" description="Helical" evidence="1">
    <location>
        <begin position="554"/>
        <end position="574"/>
    </location>
</feature>
<feature type="transmembrane region" description="Helical" evidence="1">
    <location>
        <begin position="580"/>
        <end position="600"/>
    </location>
</feature>
<feature type="transmembrane region" description="Helical" evidence="1">
    <location>
        <begin position="613"/>
        <end position="633"/>
    </location>
</feature>
<feature type="domain" description="ABC transporter" evidence="1">
    <location>
        <begin position="5"/>
        <end position="243"/>
    </location>
</feature>
<feature type="binding site" evidence="1">
    <location>
        <begin position="41"/>
        <end position="48"/>
    </location>
    <ligand>
        <name>ATP</name>
        <dbReference type="ChEBI" id="CHEBI:30616"/>
    </ligand>
</feature>
<dbReference type="EC" id="7.6.2.-" evidence="1"/>
<dbReference type="EMBL" id="CP000034">
    <property type="protein sequence ID" value="ABB62456.1"/>
    <property type="molecule type" value="Genomic_DNA"/>
</dbReference>
<dbReference type="RefSeq" id="WP_000188167.1">
    <property type="nucleotide sequence ID" value="NC_007606.1"/>
</dbReference>
<dbReference type="RefSeq" id="YP_403947.1">
    <property type="nucleotide sequence ID" value="NC_007606.1"/>
</dbReference>
<dbReference type="SMR" id="Q32DZ9"/>
<dbReference type="STRING" id="300267.SDY_2382"/>
<dbReference type="EnsemblBacteria" id="ABB62456">
    <property type="protein sequence ID" value="ABB62456"/>
    <property type="gene ID" value="SDY_2382"/>
</dbReference>
<dbReference type="KEGG" id="sdy:SDY_2382"/>
<dbReference type="PATRIC" id="fig|300267.13.peg.2875"/>
<dbReference type="HOGENOM" id="CLU_000604_78_3_6"/>
<dbReference type="Proteomes" id="UP000002716">
    <property type="component" value="Chromosome"/>
</dbReference>
<dbReference type="GO" id="GO:0005886">
    <property type="term" value="C:plasma membrane"/>
    <property type="evidence" value="ECO:0007669"/>
    <property type="project" value="UniProtKB-SubCell"/>
</dbReference>
<dbReference type="GO" id="GO:0005524">
    <property type="term" value="F:ATP binding"/>
    <property type="evidence" value="ECO:0007669"/>
    <property type="project" value="UniProtKB-KW"/>
</dbReference>
<dbReference type="GO" id="GO:0016887">
    <property type="term" value="F:ATP hydrolysis activity"/>
    <property type="evidence" value="ECO:0007669"/>
    <property type="project" value="InterPro"/>
</dbReference>
<dbReference type="GO" id="GO:0022857">
    <property type="term" value="F:transmembrane transporter activity"/>
    <property type="evidence" value="ECO:0007669"/>
    <property type="project" value="TreeGrafter"/>
</dbReference>
<dbReference type="GO" id="GO:0046677">
    <property type="term" value="P:response to antibiotic"/>
    <property type="evidence" value="ECO:0007669"/>
    <property type="project" value="UniProtKB-KW"/>
</dbReference>
<dbReference type="CDD" id="cd03255">
    <property type="entry name" value="ABC_MJ0796_LolCDE_FtsE"/>
    <property type="match status" value="1"/>
</dbReference>
<dbReference type="FunFam" id="3.40.50.300:FF:000032">
    <property type="entry name" value="Export ABC transporter ATP-binding protein"/>
    <property type="match status" value="1"/>
</dbReference>
<dbReference type="Gene3D" id="3.40.50.300">
    <property type="entry name" value="P-loop containing nucleotide triphosphate hydrolases"/>
    <property type="match status" value="1"/>
</dbReference>
<dbReference type="InterPro" id="IPR003593">
    <property type="entry name" value="AAA+_ATPase"/>
</dbReference>
<dbReference type="InterPro" id="IPR003838">
    <property type="entry name" value="ABC3_permease_C"/>
</dbReference>
<dbReference type="InterPro" id="IPR003439">
    <property type="entry name" value="ABC_transporter-like_ATP-bd"/>
</dbReference>
<dbReference type="InterPro" id="IPR017871">
    <property type="entry name" value="ABC_transporter-like_CS"/>
</dbReference>
<dbReference type="InterPro" id="IPR017911">
    <property type="entry name" value="MacB-like_ATP-bd"/>
</dbReference>
<dbReference type="InterPro" id="IPR025857">
    <property type="entry name" value="MacB_PCD"/>
</dbReference>
<dbReference type="InterPro" id="IPR050250">
    <property type="entry name" value="Macrolide_Exporter_MacB"/>
</dbReference>
<dbReference type="InterPro" id="IPR027417">
    <property type="entry name" value="P-loop_NTPase"/>
</dbReference>
<dbReference type="NCBIfam" id="NF007826">
    <property type="entry name" value="PRK10535.1"/>
    <property type="match status" value="1"/>
</dbReference>
<dbReference type="PANTHER" id="PTHR30572:SF7">
    <property type="entry name" value="MACROLIDE EXPORT ATP-BINDING_PERMEASE PROTEIN MACB"/>
    <property type="match status" value="1"/>
</dbReference>
<dbReference type="PANTHER" id="PTHR30572">
    <property type="entry name" value="MEMBRANE COMPONENT OF TRANSPORTER-RELATED"/>
    <property type="match status" value="1"/>
</dbReference>
<dbReference type="Pfam" id="PF00005">
    <property type="entry name" value="ABC_tran"/>
    <property type="match status" value="1"/>
</dbReference>
<dbReference type="Pfam" id="PF02687">
    <property type="entry name" value="FtsX"/>
    <property type="match status" value="1"/>
</dbReference>
<dbReference type="Pfam" id="PF12704">
    <property type="entry name" value="MacB_PCD"/>
    <property type="match status" value="1"/>
</dbReference>
<dbReference type="SMART" id="SM00382">
    <property type="entry name" value="AAA"/>
    <property type="match status" value="1"/>
</dbReference>
<dbReference type="SUPFAM" id="SSF52540">
    <property type="entry name" value="P-loop containing nucleoside triphosphate hydrolases"/>
    <property type="match status" value="1"/>
</dbReference>
<dbReference type="PROSITE" id="PS00211">
    <property type="entry name" value="ABC_TRANSPORTER_1"/>
    <property type="match status" value="1"/>
</dbReference>
<dbReference type="PROSITE" id="PS50893">
    <property type="entry name" value="ABC_TRANSPORTER_2"/>
    <property type="match status" value="1"/>
</dbReference>
<dbReference type="PROSITE" id="PS51267">
    <property type="entry name" value="MACB"/>
    <property type="match status" value="1"/>
</dbReference>
<keyword id="KW-0046">Antibiotic resistance</keyword>
<keyword id="KW-0067">ATP-binding</keyword>
<keyword id="KW-0997">Cell inner membrane</keyword>
<keyword id="KW-1003">Cell membrane</keyword>
<keyword id="KW-0472">Membrane</keyword>
<keyword id="KW-0547">Nucleotide-binding</keyword>
<keyword id="KW-1185">Reference proteome</keyword>
<keyword id="KW-1278">Translocase</keyword>
<keyword id="KW-0812">Transmembrane</keyword>
<keyword id="KW-1133">Transmembrane helix</keyword>
<keyword id="KW-0813">Transport</keyword>
<name>MACB_SHIDS</name>
<evidence type="ECO:0000255" key="1">
    <source>
        <dbReference type="HAMAP-Rule" id="MF_01720"/>
    </source>
</evidence>
<organism>
    <name type="scientific">Shigella dysenteriae serotype 1 (strain Sd197)</name>
    <dbReference type="NCBI Taxonomy" id="300267"/>
    <lineage>
        <taxon>Bacteria</taxon>
        <taxon>Pseudomonadati</taxon>
        <taxon>Pseudomonadota</taxon>
        <taxon>Gammaproteobacteria</taxon>
        <taxon>Enterobacterales</taxon>
        <taxon>Enterobacteriaceae</taxon>
        <taxon>Shigella</taxon>
    </lineage>
</organism>
<proteinExistence type="inferred from homology"/>
<sequence length="650" mass="70904">MTPLLELKDIRRSYPAGDEQVEVLKGITLDIYAGEMVAIVGASGSGKSTLMNILGCLDKATSGTYRVAGQDVATLDADALAQLHREHFGFIFQRYHLLSHLTAEQNVEVPAVYAGLERKQRLLRAQELLQRLGLEDRTEYYPAQLSGGQQQRVSIARALMNGGQVILADEPTGALDSHSGEEVMAILHQLRDRGHTVIIVTHDPQVAAQAERVIEIRDGEIVRNPPAIDKVNVAGGTEPVVNTVSGWRQFVSGFNEALTMAWRALAANKMRTLLTMLGIIIGIASVVSIVVVGDAAKQMVLADIRSIGTNTIDVYPGKDFGDDDPQYQQALKYDDLIAIQKQPWVASATPAVSQNLRLRYNNVDVAASANGVSGDYFNVYGMTFSEGNTFNQEQLNGRAQVVVLDSNIRRQLFPHKADVVGEVILVGNMPARVIGVAEEKQSMLGSSKVLRVWLPYSTMSGRVMGQSWLNSITVRVKEGFDSAEAEQQLTRLLSLRHGKKDFFTWNMDGVLKTVEKTTRTLQLFLTLVAVISLVVGGIGVMNIMLVSVTERTSANDIPMDVGAGASYVLYHLFFRYPCKVLPAVGGALGITLSLLIAFTLQLFLPGWEIGFSPLALLLAFLCSTVTGILFGWLPARNAARLDPVDVLARE</sequence>
<protein>
    <recommendedName>
        <fullName evidence="1">Macrolide export ATP-binding/permease protein MacB</fullName>
        <ecNumber evidence="1">7.6.2.-</ecNumber>
    </recommendedName>
</protein>
<accession>Q32DZ9</accession>
<comment type="function">
    <text evidence="1">Part of the tripartite efflux system MacAB-TolC. MacB is a non-canonical ABC transporter that contains transmembrane domains (TMD), which form a pore in the inner membrane, and an ATP-binding domain (NBD), which is responsible for energy generation. Confers resistance against macrolides.</text>
</comment>
<comment type="subunit">
    <text evidence="1">Homodimer. Part of the tripartite efflux system MacAB-TolC, which is composed of an inner membrane transporter, MacB, a periplasmic membrane fusion protein, MacA, and an outer membrane component, TolC. The complex forms a large protein conduit and can translocate molecules across both the inner and outer membranes. Interacts with MacA.</text>
</comment>
<comment type="subcellular location">
    <subcellularLocation>
        <location evidence="1">Cell inner membrane</location>
        <topology evidence="1">Multi-pass membrane protein</topology>
    </subcellularLocation>
</comment>
<comment type="similarity">
    <text evidence="1">Belongs to the ABC transporter superfamily. Macrolide exporter (TC 3.A.1.122) family.</text>
</comment>